<dbReference type="EC" id="1.5.1.2" evidence="3 6 7"/>
<dbReference type="EMBL" id="AF087859">
    <property type="protein sequence ID" value="AAP97169.1"/>
    <property type="molecule type" value="mRNA"/>
</dbReference>
<dbReference type="EMBL" id="AK291913">
    <property type="protein sequence ID" value="BAF84602.1"/>
    <property type="molecule type" value="mRNA"/>
</dbReference>
<dbReference type="EMBL" id="AL117348">
    <property type="status" value="NOT_ANNOTATED_CDS"/>
    <property type="molecule type" value="Genomic_DNA"/>
</dbReference>
<dbReference type="EMBL" id="CH471098">
    <property type="protein sequence ID" value="EAW69762.1"/>
    <property type="molecule type" value="Genomic_DNA"/>
</dbReference>
<dbReference type="EMBL" id="BC014868">
    <property type="protein sequence ID" value="AAH14868.1"/>
    <property type="molecule type" value="mRNA"/>
</dbReference>
<dbReference type="EMBL" id="BC020553">
    <property type="protein sequence ID" value="AAH20553.1"/>
    <property type="molecule type" value="mRNA"/>
</dbReference>
<dbReference type="CCDS" id="CCDS31043.1"/>
<dbReference type="RefSeq" id="NP_001258610.1">
    <property type="nucleotide sequence ID" value="NM_001271681.1"/>
</dbReference>
<dbReference type="RefSeq" id="NP_037460.2">
    <property type="nucleotide sequence ID" value="NM_013328.3"/>
</dbReference>
<dbReference type="PDB" id="6LHM">
    <property type="method" value="X-ray"/>
    <property type="resolution" value="3.40 A"/>
    <property type="chains" value="A/B/C/D/E=1-300"/>
</dbReference>
<dbReference type="PDBsum" id="6LHM"/>
<dbReference type="PCDDB" id="Q96C36"/>
<dbReference type="SMR" id="Q96C36"/>
<dbReference type="BioGRID" id="118962">
    <property type="interactions" value="236"/>
</dbReference>
<dbReference type="FunCoup" id="Q96C36">
    <property type="interactions" value="1492"/>
</dbReference>
<dbReference type="IntAct" id="Q96C36">
    <property type="interactions" value="111"/>
</dbReference>
<dbReference type="MINT" id="Q96C36"/>
<dbReference type="STRING" id="9606.ENSP00000342502"/>
<dbReference type="ChEMBL" id="CHEMBL4295923"/>
<dbReference type="DrugBank" id="DB00157">
    <property type="generic name" value="NADH"/>
</dbReference>
<dbReference type="DrugBank" id="DB00172">
    <property type="generic name" value="Proline"/>
</dbReference>
<dbReference type="GlyGen" id="Q96C36">
    <property type="glycosylation" value="3 sites, 1 N-linked glycan (1 site), 1 O-linked glycan (2 sites)"/>
</dbReference>
<dbReference type="iPTMnet" id="Q96C36"/>
<dbReference type="MetOSite" id="Q96C36"/>
<dbReference type="PhosphoSitePlus" id="Q96C36"/>
<dbReference type="SwissPalm" id="Q96C36"/>
<dbReference type="BioMuta" id="PYCR2"/>
<dbReference type="DMDM" id="60390642"/>
<dbReference type="jPOST" id="Q96C36"/>
<dbReference type="MassIVE" id="Q96C36"/>
<dbReference type="PaxDb" id="9606-ENSP00000342502"/>
<dbReference type="PeptideAtlas" id="Q96C36"/>
<dbReference type="ProteomicsDB" id="76158"/>
<dbReference type="Pumba" id="Q96C36"/>
<dbReference type="TopDownProteomics" id="Q96C36"/>
<dbReference type="Antibodypedia" id="34774">
    <property type="antibodies" value="332 antibodies from 27 providers"/>
</dbReference>
<dbReference type="DNASU" id="29920"/>
<dbReference type="Ensembl" id="ENST00000343818.11">
    <property type="protein sequence ID" value="ENSP00000342502.6"/>
    <property type="gene ID" value="ENSG00000143811.20"/>
</dbReference>
<dbReference type="GeneID" id="29920"/>
<dbReference type="KEGG" id="hsa:29920"/>
<dbReference type="MANE-Select" id="ENST00000343818.11">
    <property type="protein sequence ID" value="ENSP00000342502.6"/>
    <property type="RefSeq nucleotide sequence ID" value="NM_013328.4"/>
    <property type="RefSeq protein sequence ID" value="NP_037460.2"/>
</dbReference>
<dbReference type="UCSC" id="uc001hpq.5">
    <property type="organism name" value="human"/>
</dbReference>
<dbReference type="AGR" id="HGNC:30262"/>
<dbReference type="CTD" id="29920"/>
<dbReference type="DisGeNET" id="29920"/>
<dbReference type="GeneCards" id="PYCR2"/>
<dbReference type="HGNC" id="HGNC:30262">
    <property type="gene designation" value="PYCR2"/>
</dbReference>
<dbReference type="HPA" id="ENSG00000143811">
    <property type="expression patterns" value="Low tissue specificity"/>
</dbReference>
<dbReference type="MalaCards" id="PYCR2"/>
<dbReference type="MIM" id="616406">
    <property type="type" value="gene"/>
</dbReference>
<dbReference type="MIM" id="616420">
    <property type="type" value="phenotype"/>
</dbReference>
<dbReference type="neXtProt" id="NX_Q96C36"/>
<dbReference type="OpenTargets" id="ENSG00000143811"/>
<dbReference type="Orphanet" id="2512">
    <property type="disease" value="Autosomal recessive primary microcephaly"/>
</dbReference>
<dbReference type="Orphanet" id="481152">
    <property type="disease" value="PYCR2-related microcephaly-progressive leukoencephalopathy"/>
</dbReference>
<dbReference type="PharmGKB" id="PA134881955"/>
<dbReference type="VEuPathDB" id="HostDB:ENSG00000143811"/>
<dbReference type="eggNOG" id="KOG3124">
    <property type="taxonomic scope" value="Eukaryota"/>
</dbReference>
<dbReference type="GeneTree" id="ENSGT00950000183044"/>
<dbReference type="HOGENOM" id="CLU_042344_3_0_1"/>
<dbReference type="InParanoid" id="Q96C36"/>
<dbReference type="OMA" id="MMLNTPV"/>
<dbReference type="OrthoDB" id="10263291at2759"/>
<dbReference type="PAN-GO" id="Q96C36">
    <property type="GO annotations" value="2 GO annotations based on evolutionary models"/>
</dbReference>
<dbReference type="PhylomeDB" id="Q96C36"/>
<dbReference type="PathwayCommons" id="Q96C36"/>
<dbReference type="Reactome" id="R-HSA-8964539">
    <property type="pathway name" value="Glutamate and glutamine metabolism"/>
</dbReference>
<dbReference type="SABIO-RK" id="Q96C36"/>
<dbReference type="SignaLink" id="Q96C36"/>
<dbReference type="STRENDA-DB" id="FR1Z67">
    <property type="experiment" value="Kinetic characterization of PYCR2 enzymes"/>
</dbReference>
<dbReference type="UniPathway" id="UPA00098">
    <property type="reaction ID" value="UER00361"/>
</dbReference>
<dbReference type="BioGRID-ORCS" id="29920">
    <property type="hits" value="16 hits in 1145 CRISPR screens"/>
</dbReference>
<dbReference type="ChiTaRS" id="PYCR2">
    <property type="organism name" value="human"/>
</dbReference>
<dbReference type="GenomeRNAi" id="29920"/>
<dbReference type="Pharos" id="Q96C36">
    <property type="development level" value="Tbio"/>
</dbReference>
<dbReference type="PRO" id="PR:Q96C36"/>
<dbReference type="Proteomes" id="UP000005640">
    <property type="component" value="Chromosome 1"/>
</dbReference>
<dbReference type="RNAct" id="Q96C36">
    <property type="molecule type" value="protein"/>
</dbReference>
<dbReference type="Bgee" id="ENSG00000143811">
    <property type="expression patterns" value="Expressed in cardiac muscle of right atrium and 179 other cell types or tissues"/>
</dbReference>
<dbReference type="ExpressionAtlas" id="Q96C36">
    <property type="expression patterns" value="baseline and differential"/>
</dbReference>
<dbReference type="GO" id="GO:0005829">
    <property type="term" value="C:cytosol"/>
    <property type="evidence" value="ECO:0000304"/>
    <property type="project" value="Reactome"/>
</dbReference>
<dbReference type="GO" id="GO:0005739">
    <property type="term" value="C:mitochondrion"/>
    <property type="evidence" value="ECO:0000314"/>
    <property type="project" value="UniProtKB"/>
</dbReference>
<dbReference type="GO" id="GO:0004735">
    <property type="term" value="F:pyrroline-5-carboxylate reductase activity"/>
    <property type="evidence" value="ECO:0000314"/>
    <property type="project" value="UniProtKB"/>
</dbReference>
<dbReference type="GO" id="GO:0034599">
    <property type="term" value="P:cellular response to oxidative stress"/>
    <property type="evidence" value="ECO:0000315"/>
    <property type="project" value="UniProtKB"/>
</dbReference>
<dbReference type="GO" id="GO:0055129">
    <property type="term" value="P:L-proline biosynthetic process"/>
    <property type="evidence" value="ECO:0000318"/>
    <property type="project" value="GO_Central"/>
</dbReference>
<dbReference type="GO" id="GO:0006561">
    <property type="term" value="P:proline biosynthetic process"/>
    <property type="evidence" value="ECO:0000314"/>
    <property type="project" value="UniProtKB"/>
</dbReference>
<dbReference type="FunFam" id="3.40.50.720:FF:000064">
    <property type="entry name" value="Pyrroline-5-carboxylate reductase 1"/>
    <property type="match status" value="1"/>
</dbReference>
<dbReference type="FunFam" id="1.10.3730.10:FF:000003">
    <property type="entry name" value="Pyrroline-5-carboxylate reductase 1, mitochondrial"/>
    <property type="match status" value="1"/>
</dbReference>
<dbReference type="Gene3D" id="3.40.50.720">
    <property type="entry name" value="NAD(P)-binding Rossmann-like Domain"/>
    <property type="match status" value="1"/>
</dbReference>
<dbReference type="Gene3D" id="1.10.3730.10">
    <property type="entry name" value="ProC C-terminal domain-like"/>
    <property type="match status" value="1"/>
</dbReference>
<dbReference type="HAMAP" id="MF_01925">
    <property type="entry name" value="P5C_reductase"/>
    <property type="match status" value="1"/>
</dbReference>
<dbReference type="InterPro" id="IPR008927">
    <property type="entry name" value="6-PGluconate_DH-like_C_sf"/>
</dbReference>
<dbReference type="InterPro" id="IPR036291">
    <property type="entry name" value="NAD(P)-bd_dom_sf"/>
</dbReference>
<dbReference type="InterPro" id="IPR028939">
    <property type="entry name" value="P5C_Rdtase_cat_N"/>
</dbReference>
<dbReference type="InterPro" id="IPR053790">
    <property type="entry name" value="P5CR-like_CS"/>
</dbReference>
<dbReference type="InterPro" id="IPR029036">
    <property type="entry name" value="P5CR_dimer"/>
</dbReference>
<dbReference type="InterPro" id="IPR000304">
    <property type="entry name" value="Pyrroline-COOH_reductase"/>
</dbReference>
<dbReference type="NCBIfam" id="TIGR00112">
    <property type="entry name" value="proC"/>
    <property type="match status" value="1"/>
</dbReference>
<dbReference type="PANTHER" id="PTHR11645">
    <property type="entry name" value="PYRROLINE-5-CARBOXYLATE REDUCTASE"/>
    <property type="match status" value="1"/>
</dbReference>
<dbReference type="PANTHER" id="PTHR11645:SF61">
    <property type="entry name" value="PYRROLINE-5-CARBOXYLATE REDUCTASE 2"/>
    <property type="match status" value="1"/>
</dbReference>
<dbReference type="Pfam" id="PF03807">
    <property type="entry name" value="F420_oxidored"/>
    <property type="match status" value="1"/>
</dbReference>
<dbReference type="Pfam" id="PF14748">
    <property type="entry name" value="P5CR_dimer"/>
    <property type="match status" value="1"/>
</dbReference>
<dbReference type="PIRSF" id="PIRSF000193">
    <property type="entry name" value="Pyrrol-5-carb_rd"/>
    <property type="match status" value="1"/>
</dbReference>
<dbReference type="SUPFAM" id="SSF48179">
    <property type="entry name" value="6-phosphogluconate dehydrogenase C-terminal domain-like"/>
    <property type="match status" value="1"/>
</dbReference>
<dbReference type="SUPFAM" id="SSF51735">
    <property type="entry name" value="NAD(P)-binding Rossmann-fold domains"/>
    <property type="match status" value="1"/>
</dbReference>
<dbReference type="PROSITE" id="PS00521">
    <property type="entry name" value="P5CR"/>
    <property type="match status" value="1"/>
</dbReference>
<reference key="1">
    <citation type="submission" date="1998-08" db="EMBL/GenBank/DDBJ databases">
        <title>Cloning of a new human cDNA homologous to human pyrroline 5-carboxylate reductase mRNA.</title>
        <authorList>
            <person name="Yue P."/>
            <person name="Yu L."/>
            <person name="Zhao S.Y."/>
        </authorList>
    </citation>
    <scope>NUCLEOTIDE SEQUENCE [MRNA]</scope>
</reference>
<reference key="2">
    <citation type="journal article" date="2004" name="Nat. Genet.">
        <title>Complete sequencing and characterization of 21,243 full-length human cDNAs.</title>
        <authorList>
            <person name="Ota T."/>
            <person name="Suzuki Y."/>
            <person name="Nishikawa T."/>
            <person name="Otsuki T."/>
            <person name="Sugiyama T."/>
            <person name="Irie R."/>
            <person name="Wakamatsu A."/>
            <person name="Hayashi K."/>
            <person name="Sato H."/>
            <person name="Nagai K."/>
            <person name="Kimura K."/>
            <person name="Makita H."/>
            <person name="Sekine M."/>
            <person name="Obayashi M."/>
            <person name="Nishi T."/>
            <person name="Shibahara T."/>
            <person name="Tanaka T."/>
            <person name="Ishii S."/>
            <person name="Yamamoto J."/>
            <person name="Saito K."/>
            <person name="Kawai Y."/>
            <person name="Isono Y."/>
            <person name="Nakamura Y."/>
            <person name="Nagahari K."/>
            <person name="Murakami K."/>
            <person name="Yasuda T."/>
            <person name="Iwayanagi T."/>
            <person name="Wagatsuma M."/>
            <person name="Shiratori A."/>
            <person name="Sudo H."/>
            <person name="Hosoiri T."/>
            <person name="Kaku Y."/>
            <person name="Kodaira H."/>
            <person name="Kondo H."/>
            <person name="Sugawara M."/>
            <person name="Takahashi M."/>
            <person name="Kanda K."/>
            <person name="Yokoi T."/>
            <person name="Furuya T."/>
            <person name="Kikkawa E."/>
            <person name="Omura Y."/>
            <person name="Abe K."/>
            <person name="Kamihara K."/>
            <person name="Katsuta N."/>
            <person name="Sato K."/>
            <person name="Tanikawa M."/>
            <person name="Yamazaki M."/>
            <person name="Ninomiya K."/>
            <person name="Ishibashi T."/>
            <person name="Yamashita H."/>
            <person name="Murakawa K."/>
            <person name="Fujimori K."/>
            <person name="Tanai H."/>
            <person name="Kimata M."/>
            <person name="Watanabe M."/>
            <person name="Hiraoka S."/>
            <person name="Chiba Y."/>
            <person name="Ishida S."/>
            <person name="Ono Y."/>
            <person name="Takiguchi S."/>
            <person name="Watanabe S."/>
            <person name="Yosida M."/>
            <person name="Hotuta T."/>
            <person name="Kusano J."/>
            <person name="Kanehori K."/>
            <person name="Takahashi-Fujii A."/>
            <person name="Hara H."/>
            <person name="Tanase T.-O."/>
            <person name="Nomura Y."/>
            <person name="Togiya S."/>
            <person name="Komai F."/>
            <person name="Hara R."/>
            <person name="Takeuchi K."/>
            <person name="Arita M."/>
            <person name="Imose N."/>
            <person name="Musashino K."/>
            <person name="Yuuki H."/>
            <person name="Oshima A."/>
            <person name="Sasaki N."/>
            <person name="Aotsuka S."/>
            <person name="Yoshikawa Y."/>
            <person name="Matsunawa H."/>
            <person name="Ichihara T."/>
            <person name="Shiohata N."/>
            <person name="Sano S."/>
            <person name="Moriya S."/>
            <person name="Momiyama H."/>
            <person name="Satoh N."/>
            <person name="Takami S."/>
            <person name="Terashima Y."/>
            <person name="Suzuki O."/>
            <person name="Nakagawa S."/>
            <person name="Senoh A."/>
            <person name="Mizoguchi H."/>
            <person name="Goto Y."/>
            <person name="Shimizu F."/>
            <person name="Wakebe H."/>
            <person name="Hishigaki H."/>
            <person name="Watanabe T."/>
            <person name="Sugiyama A."/>
            <person name="Takemoto M."/>
            <person name="Kawakami B."/>
            <person name="Yamazaki M."/>
            <person name="Watanabe K."/>
            <person name="Kumagai A."/>
            <person name="Itakura S."/>
            <person name="Fukuzumi Y."/>
            <person name="Fujimori Y."/>
            <person name="Komiyama M."/>
            <person name="Tashiro H."/>
            <person name="Tanigami A."/>
            <person name="Fujiwara T."/>
            <person name="Ono T."/>
            <person name="Yamada K."/>
            <person name="Fujii Y."/>
            <person name="Ozaki K."/>
            <person name="Hirao M."/>
            <person name="Ohmori Y."/>
            <person name="Kawabata A."/>
            <person name="Hikiji T."/>
            <person name="Kobatake N."/>
            <person name="Inagaki H."/>
            <person name="Ikema Y."/>
            <person name="Okamoto S."/>
            <person name="Okitani R."/>
            <person name="Kawakami T."/>
            <person name="Noguchi S."/>
            <person name="Itoh T."/>
            <person name="Shigeta K."/>
            <person name="Senba T."/>
            <person name="Matsumura K."/>
            <person name="Nakajima Y."/>
            <person name="Mizuno T."/>
            <person name="Morinaga M."/>
            <person name="Sasaki M."/>
            <person name="Togashi T."/>
            <person name="Oyama M."/>
            <person name="Hata H."/>
            <person name="Watanabe M."/>
            <person name="Komatsu T."/>
            <person name="Mizushima-Sugano J."/>
            <person name="Satoh T."/>
            <person name="Shirai Y."/>
            <person name="Takahashi Y."/>
            <person name="Nakagawa K."/>
            <person name="Okumura K."/>
            <person name="Nagase T."/>
            <person name="Nomura N."/>
            <person name="Kikuchi H."/>
            <person name="Masuho Y."/>
            <person name="Yamashita R."/>
            <person name="Nakai K."/>
            <person name="Yada T."/>
            <person name="Nakamura Y."/>
            <person name="Ohara O."/>
            <person name="Isogai T."/>
            <person name="Sugano S."/>
        </authorList>
    </citation>
    <scope>NUCLEOTIDE SEQUENCE [LARGE SCALE MRNA]</scope>
</reference>
<reference key="3">
    <citation type="journal article" date="2006" name="Nature">
        <title>The DNA sequence and biological annotation of human chromosome 1.</title>
        <authorList>
            <person name="Gregory S.G."/>
            <person name="Barlow K.F."/>
            <person name="McLay K.E."/>
            <person name="Kaul R."/>
            <person name="Swarbreck D."/>
            <person name="Dunham A."/>
            <person name="Scott C.E."/>
            <person name="Howe K.L."/>
            <person name="Woodfine K."/>
            <person name="Spencer C.C.A."/>
            <person name="Jones M.C."/>
            <person name="Gillson C."/>
            <person name="Searle S."/>
            <person name="Zhou Y."/>
            <person name="Kokocinski F."/>
            <person name="McDonald L."/>
            <person name="Evans R."/>
            <person name="Phillips K."/>
            <person name="Atkinson A."/>
            <person name="Cooper R."/>
            <person name="Jones C."/>
            <person name="Hall R.E."/>
            <person name="Andrews T.D."/>
            <person name="Lloyd C."/>
            <person name="Ainscough R."/>
            <person name="Almeida J.P."/>
            <person name="Ambrose K.D."/>
            <person name="Anderson F."/>
            <person name="Andrew R.W."/>
            <person name="Ashwell R.I.S."/>
            <person name="Aubin K."/>
            <person name="Babbage A.K."/>
            <person name="Bagguley C.L."/>
            <person name="Bailey J."/>
            <person name="Beasley H."/>
            <person name="Bethel G."/>
            <person name="Bird C.P."/>
            <person name="Bray-Allen S."/>
            <person name="Brown J.Y."/>
            <person name="Brown A.J."/>
            <person name="Buckley D."/>
            <person name="Burton J."/>
            <person name="Bye J."/>
            <person name="Carder C."/>
            <person name="Chapman J.C."/>
            <person name="Clark S.Y."/>
            <person name="Clarke G."/>
            <person name="Clee C."/>
            <person name="Cobley V."/>
            <person name="Collier R.E."/>
            <person name="Corby N."/>
            <person name="Coville G.J."/>
            <person name="Davies J."/>
            <person name="Deadman R."/>
            <person name="Dunn M."/>
            <person name="Earthrowl M."/>
            <person name="Ellington A.G."/>
            <person name="Errington H."/>
            <person name="Frankish A."/>
            <person name="Frankland J."/>
            <person name="French L."/>
            <person name="Garner P."/>
            <person name="Garnett J."/>
            <person name="Gay L."/>
            <person name="Ghori M.R.J."/>
            <person name="Gibson R."/>
            <person name="Gilby L.M."/>
            <person name="Gillett W."/>
            <person name="Glithero R.J."/>
            <person name="Grafham D.V."/>
            <person name="Griffiths C."/>
            <person name="Griffiths-Jones S."/>
            <person name="Grocock R."/>
            <person name="Hammond S."/>
            <person name="Harrison E.S.I."/>
            <person name="Hart E."/>
            <person name="Haugen E."/>
            <person name="Heath P.D."/>
            <person name="Holmes S."/>
            <person name="Holt K."/>
            <person name="Howden P.J."/>
            <person name="Hunt A.R."/>
            <person name="Hunt S.E."/>
            <person name="Hunter G."/>
            <person name="Isherwood J."/>
            <person name="James R."/>
            <person name="Johnson C."/>
            <person name="Johnson D."/>
            <person name="Joy A."/>
            <person name="Kay M."/>
            <person name="Kershaw J.K."/>
            <person name="Kibukawa M."/>
            <person name="Kimberley A.M."/>
            <person name="King A."/>
            <person name="Knights A.J."/>
            <person name="Lad H."/>
            <person name="Laird G."/>
            <person name="Lawlor S."/>
            <person name="Leongamornlert D.A."/>
            <person name="Lloyd D.M."/>
            <person name="Loveland J."/>
            <person name="Lovell J."/>
            <person name="Lush M.J."/>
            <person name="Lyne R."/>
            <person name="Martin S."/>
            <person name="Mashreghi-Mohammadi M."/>
            <person name="Matthews L."/>
            <person name="Matthews N.S.W."/>
            <person name="McLaren S."/>
            <person name="Milne S."/>
            <person name="Mistry S."/>
            <person name="Moore M.J.F."/>
            <person name="Nickerson T."/>
            <person name="O'Dell C.N."/>
            <person name="Oliver K."/>
            <person name="Palmeiri A."/>
            <person name="Palmer S.A."/>
            <person name="Parker A."/>
            <person name="Patel D."/>
            <person name="Pearce A.V."/>
            <person name="Peck A.I."/>
            <person name="Pelan S."/>
            <person name="Phelps K."/>
            <person name="Phillimore B.J."/>
            <person name="Plumb R."/>
            <person name="Rajan J."/>
            <person name="Raymond C."/>
            <person name="Rouse G."/>
            <person name="Saenphimmachak C."/>
            <person name="Sehra H.K."/>
            <person name="Sheridan E."/>
            <person name="Shownkeen R."/>
            <person name="Sims S."/>
            <person name="Skuce C.D."/>
            <person name="Smith M."/>
            <person name="Steward C."/>
            <person name="Subramanian S."/>
            <person name="Sycamore N."/>
            <person name="Tracey A."/>
            <person name="Tromans A."/>
            <person name="Van Helmond Z."/>
            <person name="Wall M."/>
            <person name="Wallis J.M."/>
            <person name="White S."/>
            <person name="Whitehead S.L."/>
            <person name="Wilkinson J.E."/>
            <person name="Willey D.L."/>
            <person name="Williams H."/>
            <person name="Wilming L."/>
            <person name="Wray P.W."/>
            <person name="Wu Z."/>
            <person name="Coulson A."/>
            <person name="Vaudin M."/>
            <person name="Sulston J.E."/>
            <person name="Durbin R.M."/>
            <person name="Hubbard T."/>
            <person name="Wooster R."/>
            <person name="Dunham I."/>
            <person name="Carter N.P."/>
            <person name="McVean G."/>
            <person name="Ross M.T."/>
            <person name="Harrow J."/>
            <person name="Olson M.V."/>
            <person name="Beck S."/>
            <person name="Rogers J."/>
            <person name="Bentley D.R."/>
        </authorList>
    </citation>
    <scope>NUCLEOTIDE SEQUENCE [LARGE SCALE GENOMIC DNA]</scope>
</reference>
<reference key="4">
    <citation type="submission" date="2005-07" db="EMBL/GenBank/DDBJ databases">
        <authorList>
            <person name="Mural R.J."/>
            <person name="Istrail S."/>
            <person name="Sutton G.G."/>
            <person name="Florea L."/>
            <person name="Halpern A.L."/>
            <person name="Mobarry C.M."/>
            <person name="Lippert R."/>
            <person name="Walenz B."/>
            <person name="Shatkay H."/>
            <person name="Dew I."/>
            <person name="Miller J.R."/>
            <person name="Flanigan M.J."/>
            <person name="Edwards N.J."/>
            <person name="Bolanos R."/>
            <person name="Fasulo D."/>
            <person name="Halldorsson B.V."/>
            <person name="Hannenhalli S."/>
            <person name="Turner R."/>
            <person name="Yooseph S."/>
            <person name="Lu F."/>
            <person name="Nusskern D.R."/>
            <person name="Shue B.C."/>
            <person name="Zheng X.H."/>
            <person name="Zhong F."/>
            <person name="Delcher A.L."/>
            <person name="Huson D.H."/>
            <person name="Kravitz S.A."/>
            <person name="Mouchard L."/>
            <person name="Reinert K."/>
            <person name="Remington K.A."/>
            <person name="Clark A.G."/>
            <person name="Waterman M.S."/>
            <person name="Eichler E.E."/>
            <person name="Adams M.D."/>
            <person name="Hunkapiller M.W."/>
            <person name="Myers E.W."/>
            <person name="Venter J.C."/>
        </authorList>
    </citation>
    <scope>NUCLEOTIDE SEQUENCE [LARGE SCALE GENOMIC DNA]</scope>
</reference>
<reference key="5">
    <citation type="journal article" date="2004" name="Genome Res.">
        <title>The status, quality, and expansion of the NIH full-length cDNA project: the Mammalian Gene Collection (MGC).</title>
        <authorList>
            <consortium name="The MGC Project Team"/>
        </authorList>
    </citation>
    <scope>NUCLEOTIDE SEQUENCE [LARGE SCALE MRNA]</scope>
    <source>
        <tissue>Cervix</tissue>
        <tissue>Skin</tissue>
    </source>
</reference>
<reference key="6">
    <citation type="submission" date="2008-10" db="UniProtKB">
        <authorList>
            <person name="Bienvenut W.V."/>
            <person name="Heiserich L."/>
            <person name="Gottlieb E."/>
            <person name="Zebisch A."/>
            <person name="Kolch W."/>
        </authorList>
    </citation>
    <scope>PROTEIN SEQUENCE OF 2-17</scope>
    <scope>CLEAVAGE OF INITIATOR METHIONINE</scope>
    <scope>ACETYLATION AT SER-2</scope>
    <scope>IDENTIFICATION BY MASS SPECTROMETRY</scope>
    <source>
        <tissue>Colon carcinoma</tissue>
    </source>
</reference>
<reference key="7">
    <citation type="journal article" date="1981" name="J. Clin. Invest.">
        <title>Pyrroline-5-carboxylate reductase in human erythrocytes.</title>
        <authorList>
            <person name="Yeh G.C."/>
            <person name="Harris S.C."/>
            <person name="Phang J.M."/>
        </authorList>
    </citation>
    <scope>FUNCTION</scope>
    <scope>CATALYTIC ACTIVITY</scope>
    <scope>ACTIVITY REGULATION</scope>
    <scope>TISSUE SPECIFICITY</scope>
</reference>
<reference key="8">
    <citation type="journal article" date="1989" name="J. Biol. Chem.">
        <title>Purified human erythrocyte pyrroline-5-carboxylate reductase. Preferential oxidation of NADPH.</title>
        <authorList>
            <person name="Merrill M.J."/>
            <person name="Yeh G.C."/>
            <person name="Phang J.M."/>
        </authorList>
    </citation>
    <scope>FUNCTION</scope>
    <scope>CATALYTIC ACTIVITY</scope>
    <scope>SUBUNIT</scope>
    <scope>SUBCELLULAR LOCATION</scope>
    <scope>ACTIVITY REGULATION</scope>
    <scope>BIOPHYSICOCHEMICAL PROPERTIES</scope>
    <scope>TISSUE SPECIFICITY</scope>
</reference>
<reference key="9">
    <citation type="journal article" date="2003" name="Nature">
        <title>Proteomic characterization of the human centrosome by protein correlation profiling.</title>
        <authorList>
            <person name="Andersen J.S."/>
            <person name="Wilkinson C.J."/>
            <person name="Mayor T."/>
            <person name="Mortensen P."/>
            <person name="Nigg E.A."/>
            <person name="Mann M."/>
        </authorList>
    </citation>
    <scope>IDENTIFICATION BY MASS SPECTROMETRY</scope>
    <source>
        <tissue>Lymphoblast</tissue>
    </source>
</reference>
<reference key="10">
    <citation type="journal article" date="2006" name="Nat. Biotechnol.">
        <title>A probability-based approach for high-throughput protein phosphorylation analysis and site localization.</title>
        <authorList>
            <person name="Beausoleil S.A."/>
            <person name="Villen J."/>
            <person name="Gerber S.A."/>
            <person name="Rush J."/>
            <person name="Gygi S.P."/>
        </authorList>
    </citation>
    <scope>IDENTIFICATION BY MASS SPECTROMETRY [LARGE SCALE ANALYSIS]</scope>
    <source>
        <tissue>Cervix carcinoma</tissue>
    </source>
</reference>
<reference key="11">
    <citation type="journal article" date="2008" name="Proc. Natl. Acad. Sci. U.S.A.">
        <title>A quantitative atlas of mitotic phosphorylation.</title>
        <authorList>
            <person name="Dephoure N."/>
            <person name="Zhou C."/>
            <person name="Villen J."/>
            <person name="Beausoleil S.A."/>
            <person name="Bakalarski C.E."/>
            <person name="Elledge S.J."/>
            <person name="Gygi S.P."/>
        </authorList>
    </citation>
    <scope>PHOSPHORYLATION [LARGE SCALE ANALYSIS] AT SER-304</scope>
    <scope>IDENTIFICATION BY MASS SPECTROMETRY [LARGE SCALE ANALYSIS]</scope>
    <source>
        <tissue>Cervix carcinoma</tissue>
    </source>
</reference>
<reference key="12">
    <citation type="journal article" date="2009" name="Anal. Chem.">
        <title>Lys-N and trypsin cover complementary parts of the phosphoproteome in a refined SCX-based approach.</title>
        <authorList>
            <person name="Gauci S."/>
            <person name="Helbig A.O."/>
            <person name="Slijper M."/>
            <person name="Krijgsveld J."/>
            <person name="Heck A.J."/>
            <person name="Mohammed S."/>
        </authorList>
    </citation>
    <scope>IDENTIFICATION BY MASS SPECTROMETRY [LARGE SCALE ANALYSIS]</scope>
</reference>
<reference key="13">
    <citation type="journal article" date="2010" name="Sci. Signal.">
        <title>Quantitative phosphoproteomics reveals widespread full phosphorylation site occupancy during mitosis.</title>
        <authorList>
            <person name="Olsen J.V."/>
            <person name="Vermeulen M."/>
            <person name="Santamaria A."/>
            <person name="Kumar C."/>
            <person name="Miller M.L."/>
            <person name="Jensen L.J."/>
            <person name="Gnad F."/>
            <person name="Cox J."/>
            <person name="Jensen T.S."/>
            <person name="Nigg E.A."/>
            <person name="Brunak S."/>
            <person name="Mann M."/>
        </authorList>
    </citation>
    <scope>PHOSPHORYLATION [LARGE SCALE ANALYSIS] AT SER-304</scope>
    <scope>IDENTIFICATION BY MASS SPECTROMETRY [LARGE SCALE ANALYSIS]</scope>
    <source>
        <tissue>Cervix carcinoma</tissue>
    </source>
</reference>
<reference key="14">
    <citation type="journal article" date="2011" name="BMC Syst. Biol.">
        <title>Initial characterization of the human central proteome.</title>
        <authorList>
            <person name="Burkard T.R."/>
            <person name="Planyavsky M."/>
            <person name="Kaupe I."/>
            <person name="Breitwieser F.P."/>
            <person name="Buerckstuemmer T."/>
            <person name="Bennett K.L."/>
            <person name="Superti-Furga G."/>
            <person name="Colinge J."/>
        </authorList>
    </citation>
    <scope>IDENTIFICATION BY MASS SPECTROMETRY [LARGE SCALE ANALYSIS]</scope>
</reference>
<reference key="15">
    <citation type="journal article" date="2011" name="Sci. Signal.">
        <title>System-wide temporal characterization of the proteome and phosphoproteome of human embryonic stem cell differentiation.</title>
        <authorList>
            <person name="Rigbolt K.T."/>
            <person name="Prokhorova T.A."/>
            <person name="Akimov V."/>
            <person name="Henningsen J."/>
            <person name="Johansen P.T."/>
            <person name="Kratchmarova I."/>
            <person name="Kassem M."/>
            <person name="Mann M."/>
            <person name="Olsen J.V."/>
            <person name="Blagoev B."/>
        </authorList>
    </citation>
    <scope>PHOSPHORYLATION [LARGE SCALE ANALYSIS] AT SER-304</scope>
    <scope>IDENTIFICATION BY MASS SPECTROMETRY [LARGE SCALE ANALYSIS]</scope>
</reference>
<reference key="16">
    <citation type="journal article" date="2012" name="PLoS ONE">
        <title>Functional specialization in proline biosynthesis of melanoma.</title>
        <authorList>
            <person name="De Ingeniis J."/>
            <person name="Ratnikov B."/>
            <person name="Richardson A.D."/>
            <person name="Scott D.A."/>
            <person name="Aza-Blanc P."/>
            <person name="De S.K."/>
            <person name="Kazanov M."/>
            <person name="Pellecchia M."/>
            <person name="Ronai Z."/>
            <person name="Osterman A.L."/>
            <person name="Smith J.W."/>
        </authorList>
    </citation>
    <scope>FUNCTION</scope>
    <scope>CATALYTIC ACTIVITY</scope>
    <scope>BIOPHYSICOCHEMICAL PROPERTIES</scope>
    <scope>ACTIVITY REGULATION</scope>
    <scope>SUBCELLULAR LOCATION</scope>
</reference>
<reference key="17">
    <citation type="journal article" date="2013" name="J. Proteome Res.">
        <title>Toward a comprehensive characterization of a human cancer cell phosphoproteome.</title>
        <authorList>
            <person name="Zhou H."/>
            <person name="Di Palma S."/>
            <person name="Preisinger C."/>
            <person name="Peng M."/>
            <person name="Polat A.N."/>
            <person name="Heck A.J."/>
            <person name="Mohammed S."/>
        </authorList>
    </citation>
    <scope>PHOSPHORYLATION [LARGE SCALE ANALYSIS] AT SER-304</scope>
    <scope>IDENTIFICATION BY MASS SPECTROMETRY [LARGE SCALE ANALYSIS]</scope>
    <source>
        <tissue>Cervix carcinoma</tissue>
        <tissue>Erythroleukemia</tissue>
    </source>
</reference>
<reference key="18">
    <citation type="journal article" date="2014" name="Oncotarget">
        <title>Frequent amplification of ORAOV1 gene in esophageal squamous cell cancer promotes an aggressive phenotype via proline metabolism and ROS production.</title>
        <authorList>
            <person name="Togashi Y."/>
            <person name="Arao T."/>
            <person name="Kato H."/>
            <person name="Matsumoto K."/>
            <person name="Terashima M."/>
            <person name="Hayashi H."/>
            <person name="de Velasco M.A."/>
            <person name="Fujita Y."/>
            <person name="Kimura H."/>
            <person name="Yasuda T."/>
            <person name="Shiozaki H."/>
            <person name="Nishio K."/>
        </authorList>
    </citation>
    <scope>INTERACTION WITH LTO1</scope>
</reference>
<reference key="19">
    <citation type="journal article" date="2015" name="Am. J. Hum. Genet.">
        <title>Mutations in PYCR2, encoding pyrroline-5-carboxylate reductase 2, cause microcephaly and hypomyelination.</title>
        <authorList>
            <person name="Nakayama T."/>
            <person name="Al-Maawali A."/>
            <person name="El-Quessny M."/>
            <person name="Rajab A."/>
            <person name="Khalil S."/>
            <person name="Stoler J.M."/>
            <person name="Tan W.H."/>
            <person name="Nasir R."/>
            <person name="Schmitz-Abe K."/>
            <person name="Hill R.S."/>
            <person name="Partlow J.N."/>
            <person name="Al-Saffar M."/>
            <person name="Servattalab S."/>
            <person name="LaCoursiere C.M."/>
            <person name="Tambunan D.E."/>
            <person name="Coulter M.E."/>
            <person name="Elhosary P.C."/>
            <person name="Gorski G."/>
            <person name="Barkovich A.J."/>
            <person name="Markianos K."/>
            <person name="Poduri A."/>
            <person name="Mochida G.H."/>
        </authorList>
    </citation>
    <scope>FUNCTION</scope>
    <scope>SUBCELLULAR LOCATION</scope>
    <scope>TISSUE SPECIFICITY</scope>
    <scope>INVOLVEMENT IN HLD10</scope>
    <scope>VARIANTS HLD10 CYS-119 AND CYS-251</scope>
    <scope>CHARACTERIZATION OF VARIANTS HLD10 CYS-119 AND CYS-251</scope>
</reference>
<reference key="20">
    <citation type="journal article" date="2015" name="Proteomics">
        <title>N-terminome analysis of the human mitochondrial proteome.</title>
        <authorList>
            <person name="Vaca Jacome A.S."/>
            <person name="Rabilloud T."/>
            <person name="Schaeffer-Reiss C."/>
            <person name="Rompais M."/>
            <person name="Ayoub D."/>
            <person name="Lane L."/>
            <person name="Bairoch A."/>
            <person name="Van Dorsselaer A."/>
            <person name="Carapito C."/>
        </authorList>
    </citation>
    <scope>IDENTIFICATION BY MASS SPECTROMETRY [LARGE SCALE ANALYSIS]</scope>
</reference>
<comment type="function">
    <text evidence="3 5 6 7">Oxidoreductase that catalyzes the last step in proline biosynthesis, which corresponds to the reduction of pyrroline-5-carboxylate to L-proline using NAD(P)H (PubMed:23024808, PubMed:2722838, PubMed:6894153). At physiologic concentrations, has higher specific activity in the presence of NADH (PubMed:23024808, PubMed:2722838, PubMed:6894153). Involved in cellular response to oxidative stress (PubMed:25865492). In some cell types, such as erythrocytes, its primary function may be the generation of NADP(+) (PubMed:2722838, PubMed:6894153).</text>
</comment>
<comment type="catalytic activity">
    <reaction evidence="3 6 7">
        <text>L-proline + NADP(+) = (S)-1-pyrroline-5-carboxylate + NADPH + 2 H(+)</text>
        <dbReference type="Rhea" id="RHEA:14109"/>
        <dbReference type="ChEBI" id="CHEBI:15378"/>
        <dbReference type="ChEBI" id="CHEBI:17388"/>
        <dbReference type="ChEBI" id="CHEBI:57783"/>
        <dbReference type="ChEBI" id="CHEBI:58349"/>
        <dbReference type="ChEBI" id="CHEBI:60039"/>
        <dbReference type="EC" id="1.5.1.2"/>
    </reaction>
    <physiologicalReaction direction="right-to-left" evidence="10">
        <dbReference type="Rhea" id="RHEA:14111"/>
    </physiologicalReaction>
</comment>
<comment type="catalytic activity">
    <reaction evidence="3 6 7">
        <text>L-proline + NAD(+) = (S)-1-pyrroline-5-carboxylate + NADH + 2 H(+)</text>
        <dbReference type="Rhea" id="RHEA:14105"/>
        <dbReference type="ChEBI" id="CHEBI:15378"/>
        <dbReference type="ChEBI" id="CHEBI:17388"/>
        <dbReference type="ChEBI" id="CHEBI:57540"/>
        <dbReference type="ChEBI" id="CHEBI:57945"/>
        <dbReference type="ChEBI" id="CHEBI:60039"/>
        <dbReference type="EC" id="1.5.1.2"/>
    </reaction>
    <physiologicalReaction direction="right-to-left" evidence="10">
        <dbReference type="Rhea" id="RHEA:14107"/>
    </physiologicalReaction>
</comment>
<comment type="activity regulation">
    <text evidence="3 6 7">Subject to competitive inhibition by NADP (PubMed:2722838, PubMed:6894153). Was reported not to be inhibited by proline (PubMed:2722838, PubMed:6894153). However other study demonstrated an inhibition by proline (PubMed:23024808).</text>
</comment>
<comment type="biophysicochemical properties">
    <kinetics>
        <KM evidence="6">1.49 mM for pyrroline-5-carboxylate (in the presence of NADH)</KM>
        <KM evidence="6">0.23 mM for pyrroline-5-carboxylate (in the presence of NADPH)</KM>
        <KM evidence="3">1 mM for (S)-1-pyrroline-5-carboxylate (in the presence of NADH)</KM>
        <KM evidence="3">1.7 mM for (S)-1-pyrroline-5-carboxylate (in the presence of NADPH)</KM>
        <KM evidence="6">0.64 mM for NADH</KM>
        <KM evidence="6">0.04 mM for NADPH</KM>
        <KM evidence="3">0.22 mM for NADH</KM>
        <KM evidence="3">0.24 mM for NADPH</KM>
        <Vmax evidence="6">28.5 umol/min/ug enzyme (in the presence of NADH)</Vmax>
        <Vmax evidence="6">3.7 umol/min/ug enzyme (in the presence of NADPH)</Vmax>
        <text evidence="3">kcat is 149 sec(-1) for the NADH-dependent reduction of (S)-1-pyrroline-5-carboxylate. kcat is 85 sec(-1) for the NADPH-dependent reduction of (S)-1-pyrroline-5-carboxylate (PubMed:23024808). kcat is 218.8 sec(-1) for the oxidation of NADH (PubMed:23024808). kcat is 93.2 sec(-1) for the oxidation of NADPH (PubMed:23024808).</text>
    </kinetics>
</comment>
<comment type="pathway">
    <text>Amino-acid biosynthesis; L-proline biosynthesis; L-proline from L-glutamate 5-semialdehyde: step 1/1.</text>
</comment>
<comment type="subunit">
    <text evidence="4 11">Homodecamer; composed of 5 homodimers (Probable). Interacts with LTO1 (PubMed:24930674).</text>
</comment>
<comment type="subcellular location">
    <subcellularLocation>
        <location evidence="6">Cytoplasm</location>
    </subcellularLocation>
    <subcellularLocation>
        <location evidence="3 5">Mitochondrion</location>
    </subcellularLocation>
</comment>
<comment type="tissue specificity">
    <text evidence="5 6 7">Detected in erythrocytes (at protein level) (PubMed:2722838, PubMed:6894153). Expressed in fetal brain (PubMed:25865492).</text>
</comment>
<comment type="disease" evidence="5">
    <disease id="DI-04450">
        <name>Leukodystrophy, hypomyelinating, 10</name>
        <acronym>HLD10</acronym>
        <description>An autosomal recessive neurologic disorder characterized by postnatal microcephaly, severely delayed psychomotor development, hypomyelination, and reduced cerebral white-matter volume.</description>
        <dbReference type="MIM" id="616420"/>
    </disease>
    <text>The disease is caused by variants affecting the gene represented in this entry.</text>
</comment>
<comment type="similarity">
    <text evidence="9">Belongs to the pyrroline-5-carboxylate reductase family.</text>
</comment>
<organism>
    <name type="scientific">Homo sapiens</name>
    <name type="common">Human</name>
    <dbReference type="NCBI Taxonomy" id="9606"/>
    <lineage>
        <taxon>Eukaryota</taxon>
        <taxon>Metazoa</taxon>
        <taxon>Chordata</taxon>
        <taxon>Craniata</taxon>
        <taxon>Vertebrata</taxon>
        <taxon>Euteleostomi</taxon>
        <taxon>Mammalia</taxon>
        <taxon>Eutheria</taxon>
        <taxon>Euarchontoglires</taxon>
        <taxon>Primates</taxon>
        <taxon>Haplorrhini</taxon>
        <taxon>Catarrhini</taxon>
        <taxon>Hominidae</taxon>
        <taxon>Homo</taxon>
    </lineage>
</organism>
<sequence>MSVGFIGAGQLAYALARGFTAAGILSAHKIIASSPEMNLPTVSALRKMGVNLTRSNKETVKHSDVLFLAVKPHIIPFILDEIGADVQARHIVVSCAAGVTISSVEKKLMAFQPAPKVIRCMTNTPVVVQEGATVYATGTHALVEDGQLLEQLMSSVGFCTEVEEDLIDAVTGLSGSGPAYAFMALDALADGGVKMGLPRRLAIQLGAQALLGAAKMLLDSEQHPCQLKDNVCSPGGATIHALHFLESGGFRSLLINAVEASCIRTRELQSMADQEKISPAALKKTLLDRVKLESPTVSTLTPSSPGKLLTRSLALGGKKD</sequence>
<accession>Q96C36</accession>
<accession>A8K798</accession>
<accession>Q7Z515</accession>
<accession>Q9Y5J4</accession>
<keyword id="KW-0002">3D-structure</keyword>
<keyword id="KW-0007">Acetylation</keyword>
<keyword id="KW-0028">Amino-acid biosynthesis</keyword>
<keyword id="KW-0963">Cytoplasm</keyword>
<keyword id="KW-0903">Direct protein sequencing</keyword>
<keyword id="KW-0225">Disease variant</keyword>
<keyword id="KW-1026">Leukodystrophy</keyword>
<keyword id="KW-0496">Mitochondrion</keyword>
<keyword id="KW-0521">NADP</keyword>
<keyword id="KW-0560">Oxidoreductase</keyword>
<keyword id="KW-0597">Phosphoprotein</keyword>
<keyword id="KW-0641">Proline biosynthesis</keyword>
<keyword id="KW-1267">Proteomics identification</keyword>
<keyword id="KW-1185">Reference proteome</keyword>
<protein>
    <recommendedName>
        <fullName>Pyrroline-5-carboxylate reductase 2</fullName>
        <shortName>P5C reductase 2</shortName>
        <shortName>P5CR 2</shortName>
        <ecNumber evidence="3 6 7">1.5.1.2</ecNumber>
    </recommendedName>
</protein>
<proteinExistence type="evidence at protein level"/>
<name>P5CR2_HUMAN</name>
<feature type="initiator methionine" description="Removed" evidence="8">
    <location>
        <position position="1"/>
    </location>
</feature>
<feature type="chain" id="PRO_0000187317" description="Pyrroline-5-carboxylate reductase 2">
    <location>
        <begin position="2"/>
        <end position="320"/>
    </location>
</feature>
<feature type="region of interest" description="Disordered" evidence="2">
    <location>
        <begin position="295"/>
        <end position="320"/>
    </location>
</feature>
<feature type="compositionally biased region" description="Low complexity" evidence="2">
    <location>
        <begin position="295"/>
        <end position="305"/>
    </location>
</feature>
<feature type="binding site" evidence="1">
    <location>
        <begin position="6"/>
        <end position="11"/>
    </location>
    <ligand>
        <name>NADP(+)</name>
        <dbReference type="ChEBI" id="CHEBI:58349"/>
    </ligand>
</feature>
<feature type="binding site" evidence="1">
    <location>
        <position position="8"/>
    </location>
    <ligand>
        <name>NADPH</name>
        <dbReference type="ChEBI" id="CHEBI:57783"/>
    </ligand>
</feature>
<feature type="binding site" evidence="1">
    <location>
        <position position="10"/>
    </location>
    <ligand>
        <name>NADPH</name>
        <dbReference type="ChEBI" id="CHEBI:57783"/>
    </ligand>
</feature>
<feature type="binding site" evidence="1">
    <location>
        <position position="11"/>
    </location>
    <ligand>
        <name>NADPH</name>
        <dbReference type="ChEBI" id="CHEBI:57783"/>
    </ligand>
</feature>
<feature type="binding site" evidence="1">
    <location>
        <position position="34"/>
    </location>
    <ligand>
        <name>NADP(+)</name>
        <dbReference type="ChEBI" id="CHEBI:58349"/>
    </ligand>
</feature>
<feature type="binding site" evidence="1">
    <location>
        <position position="34"/>
    </location>
    <ligand>
        <name>NADPH</name>
        <dbReference type="ChEBI" id="CHEBI:57783"/>
    </ligand>
</feature>
<feature type="binding site" evidence="1">
    <location>
        <position position="36"/>
    </location>
    <ligand>
        <name>NADPH</name>
        <dbReference type="ChEBI" id="CHEBI:57783"/>
    </ligand>
</feature>
<feature type="binding site" evidence="1">
    <location>
        <position position="56"/>
    </location>
    <ligand>
        <name>NADP(+)</name>
        <dbReference type="ChEBI" id="CHEBI:58349"/>
    </ligand>
</feature>
<feature type="binding site" evidence="1">
    <location>
        <position position="56"/>
    </location>
    <ligand>
        <name>NADPH</name>
        <dbReference type="ChEBI" id="CHEBI:57783"/>
    </ligand>
</feature>
<feature type="binding site" evidence="1">
    <location>
        <begin position="69"/>
        <end position="72"/>
    </location>
    <ligand>
        <name>NADP(+)</name>
        <dbReference type="ChEBI" id="CHEBI:58349"/>
    </ligand>
</feature>
<feature type="binding site" evidence="1">
    <location>
        <position position="70"/>
    </location>
    <ligand>
        <name>NADPH</name>
        <dbReference type="ChEBI" id="CHEBI:57783"/>
    </ligand>
</feature>
<feature type="binding site" evidence="1">
    <location>
        <position position="71"/>
    </location>
    <ligand>
        <name>NADPH</name>
        <dbReference type="ChEBI" id="CHEBI:57783"/>
    </ligand>
</feature>
<feature type="binding site" evidence="1">
    <location>
        <begin position="95"/>
        <end position="97"/>
    </location>
    <ligand>
        <name>NADP(+)</name>
        <dbReference type="ChEBI" id="CHEBI:58349"/>
    </ligand>
</feature>
<feature type="binding site" evidence="1">
    <location>
        <position position="97"/>
    </location>
    <ligand>
        <name>NADPH</name>
        <dbReference type="ChEBI" id="CHEBI:57783"/>
    </ligand>
</feature>
<feature type="binding site" evidence="1">
    <location>
        <position position="164"/>
    </location>
    <ligand>
        <name>L-proline</name>
        <dbReference type="ChEBI" id="CHEBI:60039"/>
    </ligand>
</feature>
<feature type="binding site" evidence="1">
    <location>
        <position position="230"/>
    </location>
    <ligand>
        <name>NADPH</name>
        <dbReference type="ChEBI" id="CHEBI:57783"/>
    </ligand>
</feature>
<feature type="binding site" evidence="1">
    <location>
        <position position="237"/>
    </location>
    <ligand>
        <name>L-proline</name>
        <dbReference type="ChEBI" id="CHEBI:60039"/>
    </ligand>
</feature>
<feature type="binding site" evidence="1">
    <location>
        <position position="238"/>
    </location>
    <ligand>
        <name>L-proline</name>
        <dbReference type="ChEBI" id="CHEBI:60039"/>
    </ligand>
</feature>
<feature type="modified residue" description="N-acetylserine" evidence="8">
    <location>
        <position position="2"/>
    </location>
</feature>
<feature type="modified residue" description="Phosphoserine" evidence="13 14 15 16">
    <location>
        <position position="304"/>
    </location>
</feature>
<feature type="sequence variant" id="VAR_074608" description="In HLD10; severe decrease of protein amount; does not affect mitochondrial localization; dbSNP:rs372781135." evidence="5">
    <original>R</original>
    <variation>C</variation>
    <location>
        <position position="119"/>
    </location>
</feature>
<feature type="sequence variant" id="VAR_074609" description="In HLD10; mild decrease of homodimerization; does not affect mitochondrial localization; dbSNP:rs876657403." evidence="5">
    <original>R</original>
    <variation>C</variation>
    <location>
        <position position="251"/>
    </location>
</feature>
<feature type="sequence conflict" description="In Ref. 1; AAP97169." evidence="9" ref="1">
    <original>Y</original>
    <variation>N</variation>
    <location>
        <position position="13"/>
    </location>
</feature>
<feature type="sequence conflict" description="In Ref. 1; AAP97169." evidence="9" ref="1">
    <original>GI</original>
    <variation>AF</variation>
    <location>
        <begin position="23"/>
        <end position="24"/>
    </location>
</feature>
<feature type="sequence conflict" description="In Ref. 1; AAP97169." evidence="9" ref="1">
    <original>PH</original>
    <variation>HI</variation>
    <location>
        <begin position="72"/>
        <end position="73"/>
    </location>
</feature>
<feature type="strand" evidence="17">
    <location>
        <begin position="3"/>
        <end position="6"/>
    </location>
</feature>
<feature type="helix" evidence="17">
    <location>
        <begin position="10"/>
        <end position="22"/>
    </location>
</feature>
<feature type="strand" evidence="17">
    <location>
        <begin position="27"/>
        <end position="31"/>
    </location>
</feature>
<feature type="helix" evidence="17">
    <location>
        <begin position="40"/>
        <end position="48"/>
    </location>
</feature>
<feature type="helix" evidence="17">
    <location>
        <begin position="57"/>
        <end position="60"/>
    </location>
</feature>
<feature type="strand" evidence="17">
    <location>
        <begin position="64"/>
        <end position="68"/>
    </location>
</feature>
<feature type="turn" evidence="17">
    <location>
        <begin position="72"/>
        <end position="74"/>
    </location>
</feature>
<feature type="helix" evidence="17">
    <location>
        <begin position="75"/>
        <end position="82"/>
    </location>
</feature>
<feature type="turn" evidence="17">
    <location>
        <begin position="83"/>
        <end position="85"/>
    </location>
</feature>
<feature type="strand" evidence="17">
    <location>
        <begin position="91"/>
        <end position="94"/>
    </location>
</feature>
<feature type="helix" evidence="17">
    <location>
        <begin position="101"/>
        <end position="111"/>
    </location>
</feature>
<feature type="strand" evidence="17">
    <location>
        <begin position="112"/>
        <end position="114"/>
    </location>
</feature>
<feature type="strand" evidence="17">
    <location>
        <begin position="116"/>
        <end position="120"/>
    </location>
</feature>
<feature type="turn" evidence="17">
    <location>
        <begin position="125"/>
        <end position="129"/>
    </location>
</feature>
<feature type="strand" evidence="17">
    <location>
        <begin position="131"/>
        <end position="137"/>
    </location>
</feature>
<feature type="helix" evidence="17">
    <location>
        <begin position="143"/>
        <end position="154"/>
    </location>
</feature>
<feature type="strand" evidence="17">
    <location>
        <begin position="157"/>
        <end position="161"/>
    </location>
</feature>
<feature type="helix" evidence="17">
    <location>
        <begin position="164"/>
        <end position="166"/>
    </location>
</feature>
<feature type="helix" evidence="17">
    <location>
        <begin position="167"/>
        <end position="174"/>
    </location>
</feature>
<feature type="helix" evidence="17">
    <location>
        <begin position="177"/>
        <end position="195"/>
    </location>
</feature>
<feature type="helix" evidence="17">
    <location>
        <begin position="199"/>
        <end position="219"/>
    </location>
</feature>
<feature type="helix" evidence="17">
    <location>
        <begin position="224"/>
        <end position="231"/>
    </location>
</feature>
<feature type="helix" evidence="17">
    <location>
        <begin position="237"/>
        <end position="247"/>
    </location>
</feature>
<feature type="helix" evidence="17">
    <location>
        <begin position="250"/>
        <end position="269"/>
    </location>
</feature>
<gene>
    <name evidence="12" type="primary">PYCR2</name>
</gene>
<evidence type="ECO:0000250" key="1">
    <source>
        <dbReference type="UniProtKB" id="P32322"/>
    </source>
</evidence>
<evidence type="ECO:0000256" key="2">
    <source>
        <dbReference type="SAM" id="MobiDB-lite"/>
    </source>
</evidence>
<evidence type="ECO:0000269" key="3">
    <source>
    </source>
</evidence>
<evidence type="ECO:0000269" key="4">
    <source>
    </source>
</evidence>
<evidence type="ECO:0000269" key="5">
    <source>
    </source>
</evidence>
<evidence type="ECO:0000269" key="6">
    <source>
    </source>
</evidence>
<evidence type="ECO:0000269" key="7">
    <source>
    </source>
</evidence>
<evidence type="ECO:0000269" key="8">
    <source ref="6"/>
</evidence>
<evidence type="ECO:0000305" key="9"/>
<evidence type="ECO:0000305" key="10">
    <source>
    </source>
</evidence>
<evidence type="ECO:0000305" key="11">
    <source>
    </source>
</evidence>
<evidence type="ECO:0000312" key="12">
    <source>
        <dbReference type="HGNC" id="HGNC:30262"/>
    </source>
</evidence>
<evidence type="ECO:0007744" key="13">
    <source>
    </source>
</evidence>
<evidence type="ECO:0007744" key="14">
    <source>
    </source>
</evidence>
<evidence type="ECO:0007744" key="15">
    <source>
    </source>
</evidence>
<evidence type="ECO:0007744" key="16">
    <source>
    </source>
</evidence>
<evidence type="ECO:0007829" key="17">
    <source>
        <dbReference type="PDB" id="6LHM"/>
    </source>
</evidence>